<feature type="chain" id="PRO_0000105605" description="HTH-type transcriptional regulator CbbR">
    <location>
        <begin position="1"/>
        <end position="313"/>
    </location>
</feature>
<feature type="domain" description="HTH lysR-type" evidence="1">
    <location>
        <begin position="1"/>
        <end position="61"/>
    </location>
</feature>
<feature type="DNA-binding region" description="H-T-H motif" evidence="1">
    <location>
        <begin position="21"/>
        <end position="40"/>
    </location>
</feature>
<feature type="sequence conflict" description="In Ref. 1; AAF25374." evidence="2" ref="1">
    <original>A</original>
    <variation>T</variation>
    <location>
        <position position="14"/>
    </location>
</feature>
<feature type="sequence conflict" description="In Ref. 1; AAF25374." evidence="2" ref="1">
    <original>D</original>
    <variation>I</variation>
    <location>
        <position position="83"/>
    </location>
</feature>
<geneLocation type="plasmid">
    <name>pSMED01</name>
</geneLocation>
<reference key="1">
    <citation type="submission" date="1999-12" db="EMBL/GenBank/DDBJ databases">
        <title>Genetic regulation of C1 metabolism in Sinorhizobium meliloti.</title>
        <authorList>
            <person name="Fenner B.J."/>
            <person name="Tiwari R.P."/>
            <person name="Dilworth M.J."/>
        </authorList>
    </citation>
    <scope>NUCLEOTIDE SEQUENCE [GENOMIC DNA]</scope>
</reference>
<reference key="2">
    <citation type="submission" date="2007-06" db="EMBL/GenBank/DDBJ databases">
        <title>Complete sequence of Sinorhizobium medicae WSM419 plasmid pSMED01.</title>
        <authorList>
            <consortium name="US DOE Joint Genome Institute"/>
            <person name="Copeland A."/>
            <person name="Lucas S."/>
            <person name="Lapidus A."/>
            <person name="Barry K."/>
            <person name="Glavina del Rio T."/>
            <person name="Dalin E."/>
            <person name="Tice H."/>
            <person name="Pitluck S."/>
            <person name="Chain P."/>
            <person name="Malfatti S."/>
            <person name="Shin M."/>
            <person name="Vergez L."/>
            <person name="Schmutz J."/>
            <person name="Larimer F."/>
            <person name="Land M."/>
            <person name="Hauser L."/>
            <person name="Kyrpides N."/>
            <person name="Mikhailova N."/>
            <person name="Reeve W.G."/>
            <person name="Richardson P."/>
        </authorList>
    </citation>
    <scope>NUCLEOTIDE SEQUENCE [LARGE SCALE GENOMIC DNA]</scope>
    <source>
        <strain>WSM419</strain>
    </source>
</reference>
<protein>
    <recommendedName>
        <fullName>HTH-type transcriptional regulator CbbR</fullName>
    </recommendedName>
    <alternativeName>
        <fullName>RuBisCO operon transcriptional regulator</fullName>
    </alternativeName>
</protein>
<organism>
    <name type="scientific">Sinorhizobium medicae (strain WSM419)</name>
    <name type="common">Ensifer medicae</name>
    <dbReference type="NCBI Taxonomy" id="366394"/>
    <lineage>
        <taxon>Bacteria</taxon>
        <taxon>Pseudomonadati</taxon>
        <taxon>Pseudomonadota</taxon>
        <taxon>Alphaproteobacteria</taxon>
        <taxon>Hyphomicrobiales</taxon>
        <taxon>Rhizobiaceae</taxon>
        <taxon>Sinorhizobium/Ensifer group</taxon>
        <taxon>Sinorhizobium</taxon>
    </lineage>
</organism>
<dbReference type="EMBL" id="AF211846">
    <property type="protein sequence ID" value="AAF25374.1"/>
    <property type="molecule type" value="Genomic_DNA"/>
</dbReference>
<dbReference type="EMBL" id="CP000739">
    <property type="protein sequence ID" value="ABR62729.1"/>
    <property type="molecule type" value="Genomic_DNA"/>
</dbReference>
<dbReference type="RefSeq" id="WP_011969551.1">
    <property type="nucleotide sequence ID" value="NC_009620.1"/>
</dbReference>
<dbReference type="RefSeq" id="YP_001312662.1">
    <property type="nucleotide sequence ID" value="NC_009620.1"/>
</dbReference>
<dbReference type="SMR" id="P56885"/>
<dbReference type="KEGG" id="smd:Smed_3919"/>
<dbReference type="PATRIC" id="fig|366394.8.peg.365"/>
<dbReference type="HOGENOM" id="CLU_039613_6_1_5"/>
<dbReference type="OrthoDB" id="7840053at2"/>
<dbReference type="Proteomes" id="UP000001108">
    <property type="component" value="Plasmid pSMED01"/>
</dbReference>
<dbReference type="GO" id="GO:0003700">
    <property type="term" value="F:DNA-binding transcription factor activity"/>
    <property type="evidence" value="ECO:0007669"/>
    <property type="project" value="InterPro"/>
</dbReference>
<dbReference type="GO" id="GO:0000976">
    <property type="term" value="F:transcription cis-regulatory region binding"/>
    <property type="evidence" value="ECO:0007669"/>
    <property type="project" value="TreeGrafter"/>
</dbReference>
<dbReference type="CDD" id="cd08419">
    <property type="entry name" value="PBP2_CbbR_RubisCO_like"/>
    <property type="match status" value="1"/>
</dbReference>
<dbReference type="Gene3D" id="3.40.190.10">
    <property type="entry name" value="Periplasmic binding protein-like II"/>
    <property type="match status" value="2"/>
</dbReference>
<dbReference type="Gene3D" id="1.10.10.10">
    <property type="entry name" value="Winged helix-like DNA-binding domain superfamily/Winged helix DNA-binding domain"/>
    <property type="match status" value="1"/>
</dbReference>
<dbReference type="InterPro" id="IPR005119">
    <property type="entry name" value="LysR_subst-bd"/>
</dbReference>
<dbReference type="InterPro" id="IPR000847">
    <property type="entry name" value="Tscrpt_reg_HTH_LysR"/>
</dbReference>
<dbReference type="InterPro" id="IPR036388">
    <property type="entry name" value="WH-like_DNA-bd_sf"/>
</dbReference>
<dbReference type="InterPro" id="IPR036390">
    <property type="entry name" value="WH_DNA-bd_sf"/>
</dbReference>
<dbReference type="PANTHER" id="PTHR30126:SF5">
    <property type="entry name" value="HTH-TYPE TRANSCRIPTIONAL ACTIVATOR CMPR"/>
    <property type="match status" value="1"/>
</dbReference>
<dbReference type="PANTHER" id="PTHR30126">
    <property type="entry name" value="HTH-TYPE TRANSCRIPTIONAL REGULATOR"/>
    <property type="match status" value="1"/>
</dbReference>
<dbReference type="Pfam" id="PF00126">
    <property type="entry name" value="HTH_1"/>
    <property type="match status" value="1"/>
</dbReference>
<dbReference type="Pfam" id="PF03466">
    <property type="entry name" value="LysR_substrate"/>
    <property type="match status" value="1"/>
</dbReference>
<dbReference type="SUPFAM" id="SSF53850">
    <property type="entry name" value="Periplasmic binding protein-like II"/>
    <property type="match status" value="1"/>
</dbReference>
<dbReference type="SUPFAM" id="SSF46785">
    <property type="entry name" value="Winged helix' DNA-binding domain"/>
    <property type="match status" value="1"/>
</dbReference>
<dbReference type="PROSITE" id="PS50931">
    <property type="entry name" value="HTH_LYSR"/>
    <property type="match status" value="1"/>
</dbReference>
<comment type="function">
    <text>Transcriptional activator for the cbb operon for RuBisCO and other Calvin cycle genes.</text>
</comment>
<comment type="similarity">
    <text evidence="2">Belongs to the LysR transcriptional regulatory family.</text>
</comment>
<sequence length="313" mass="34164">MRNVSLRQLRTVEAVCRLGKINLAAEALGLTGPALTLQIQHLERDTGVALFDRTRGGMVPTAYGLAFLEAARAVEDSLAALEDSIGAISGLRTGRLRLGVVSTGKYFAPQLIAAFRDQVPAVEINLFIGNRAEIIAKLRDHEIDIALMGRPPRDFEVRAQVFGDHPLVFIAPAGHPLAGVLEISRERIAREQFLVREKGSGTRISLEIFLSDTPHELEELGTEIASNETIKQAVIAGLGIAFISAHTIEQEVKLGRLVILDVIDTPIRRQWFTVSRLDRAATPAMQAFEQFVLSSGARYLPVVSKPYPANAFG</sequence>
<proteinExistence type="inferred from homology"/>
<gene>
    <name type="primary">cbbR</name>
    <name type="ordered locus">Smed_3919</name>
</gene>
<keyword id="KW-0010">Activator</keyword>
<keyword id="KW-0238">DNA-binding</keyword>
<keyword id="KW-0614">Plasmid</keyword>
<keyword id="KW-0804">Transcription</keyword>
<keyword id="KW-0805">Transcription regulation</keyword>
<accession>P56885</accession>
<accession>A6UGE9</accession>
<evidence type="ECO:0000255" key="1">
    <source>
        <dbReference type="PROSITE-ProRule" id="PRU00253"/>
    </source>
</evidence>
<evidence type="ECO:0000305" key="2"/>
<name>CBBR_SINMW</name>